<name>MTNA_BACHK</name>
<comment type="function">
    <text evidence="1">Catalyzes the interconversion of methylthioribose-1-phosphate (MTR-1-P) into methylthioribulose-1-phosphate (MTRu-1-P).</text>
</comment>
<comment type="catalytic activity">
    <reaction evidence="1">
        <text>5-(methylsulfanyl)-alpha-D-ribose 1-phosphate = 5-(methylsulfanyl)-D-ribulose 1-phosphate</text>
        <dbReference type="Rhea" id="RHEA:19989"/>
        <dbReference type="ChEBI" id="CHEBI:58533"/>
        <dbReference type="ChEBI" id="CHEBI:58548"/>
        <dbReference type="EC" id="5.3.1.23"/>
    </reaction>
</comment>
<comment type="pathway">
    <text evidence="1">Amino-acid biosynthesis; L-methionine biosynthesis via salvage pathway; L-methionine from S-methyl-5-thio-alpha-D-ribose 1-phosphate: step 1/6.</text>
</comment>
<comment type="subunit">
    <text evidence="1">Homodimer.</text>
</comment>
<comment type="similarity">
    <text evidence="1">Belongs to the EIF-2B alpha/beta/delta subunits family. MtnA subfamily.</text>
</comment>
<dbReference type="EC" id="5.3.1.23" evidence="1"/>
<dbReference type="EMBL" id="AE017355">
    <property type="protein sequence ID" value="AAT60702.1"/>
    <property type="molecule type" value="Genomic_DNA"/>
</dbReference>
<dbReference type="RefSeq" id="WP_000109057.1">
    <property type="nucleotide sequence ID" value="NC_005957.1"/>
</dbReference>
<dbReference type="RefSeq" id="YP_038093.1">
    <property type="nucleotide sequence ID" value="NC_005957.1"/>
</dbReference>
<dbReference type="SMR" id="Q6HED3"/>
<dbReference type="KEGG" id="btk:BT9727_3774"/>
<dbReference type="PATRIC" id="fig|281309.8.peg.4024"/>
<dbReference type="HOGENOM" id="CLU_016218_1_2_9"/>
<dbReference type="UniPathway" id="UPA00904">
    <property type="reaction ID" value="UER00874"/>
</dbReference>
<dbReference type="Proteomes" id="UP000001301">
    <property type="component" value="Chromosome"/>
</dbReference>
<dbReference type="GO" id="GO:0046523">
    <property type="term" value="F:S-methyl-5-thioribose-1-phosphate isomerase activity"/>
    <property type="evidence" value="ECO:0007669"/>
    <property type="project" value="UniProtKB-UniRule"/>
</dbReference>
<dbReference type="GO" id="GO:0019509">
    <property type="term" value="P:L-methionine salvage from methylthioadenosine"/>
    <property type="evidence" value="ECO:0007669"/>
    <property type="project" value="UniProtKB-UniRule"/>
</dbReference>
<dbReference type="FunFam" id="1.20.120.420:FF:000005">
    <property type="entry name" value="Methylthioribose-1-phosphate isomerase"/>
    <property type="match status" value="1"/>
</dbReference>
<dbReference type="FunFam" id="3.40.50.10470:FF:000006">
    <property type="entry name" value="Methylthioribose-1-phosphate isomerase"/>
    <property type="match status" value="1"/>
</dbReference>
<dbReference type="Gene3D" id="1.20.120.420">
    <property type="entry name" value="translation initiation factor eif-2b, domain 1"/>
    <property type="match status" value="1"/>
</dbReference>
<dbReference type="Gene3D" id="3.40.50.10470">
    <property type="entry name" value="Translation initiation factor eif-2b, domain 2"/>
    <property type="match status" value="1"/>
</dbReference>
<dbReference type="HAMAP" id="MF_01678">
    <property type="entry name" value="Salvage_MtnA"/>
    <property type="match status" value="1"/>
</dbReference>
<dbReference type="InterPro" id="IPR000649">
    <property type="entry name" value="IF-2B-related"/>
</dbReference>
<dbReference type="InterPro" id="IPR005251">
    <property type="entry name" value="IF-M1Pi"/>
</dbReference>
<dbReference type="InterPro" id="IPR042529">
    <property type="entry name" value="IF_2B-like_C"/>
</dbReference>
<dbReference type="InterPro" id="IPR011559">
    <property type="entry name" value="Initiation_fac_2B_a/b/d"/>
</dbReference>
<dbReference type="InterPro" id="IPR027363">
    <property type="entry name" value="M1Pi_N"/>
</dbReference>
<dbReference type="InterPro" id="IPR037171">
    <property type="entry name" value="NagB/RpiA_transferase-like"/>
</dbReference>
<dbReference type="NCBIfam" id="TIGR00524">
    <property type="entry name" value="eIF-2B_rel"/>
    <property type="match status" value="1"/>
</dbReference>
<dbReference type="NCBIfam" id="NF004326">
    <property type="entry name" value="PRK05720.1"/>
    <property type="match status" value="1"/>
</dbReference>
<dbReference type="NCBIfam" id="TIGR00512">
    <property type="entry name" value="salvage_mtnA"/>
    <property type="match status" value="1"/>
</dbReference>
<dbReference type="PANTHER" id="PTHR43475">
    <property type="entry name" value="METHYLTHIORIBOSE-1-PHOSPHATE ISOMERASE"/>
    <property type="match status" value="1"/>
</dbReference>
<dbReference type="PANTHER" id="PTHR43475:SF4">
    <property type="entry name" value="METHYLTHIORIBOSE-1-PHOSPHATE ISOMERASE"/>
    <property type="match status" value="1"/>
</dbReference>
<dbReference type="Pfam" id="PF01008">
    <property type="entry name" value="IF-2B"/>
    <property type="match status" value="1"/>
</dbReference>
<dbReference type="SUPFAM" id="SSF100950">
    <property type="entry name" value="NagB/RpiA/CoA transferase-like"/>
    <property type="match status" value="1"/>
</dbReference>
<feature type="chain" id="PRO_0000357154" description="Methylthioribose-1-phosphate isomerase">
    <location>
        <begin position="1"/>
        <end position="351"/>
    </location>
</feature>
<feature type="active site" description="Proton donor" evidence="1">
    <location>
        <position position="240"/>
    </location>
</feature>
<feature type="binding site" evidence="1">
    <location>
        <begin position="51"/>
        <end position="53"/>
    </location>
    <ligand>
        <name>substrate</name>
    </ligand>
</feature>
<feature type="binding site" evidence="1">
    <location>
        <position position="94"/>
    </location>
    <ligand>
        <name>substrate</name>
    </ligand>
</feature>
<feature type="binding site" evidence="1">
    <location>
        <position position="199"/>
    </location>
    <ligand>
        <name>substrate</name>
    </ligand>
</feature>
<feature type="binding site" evidence="1">
    <location>
        <begin position="250"/>
        <end position="251"/>
    </location>
    <ligand>
        <name>substrate</name>
    </ligand>
</feature>
<feature type="site" description="Transition state stabilizer" evidence="1">
    <location>
        <position position="160"/>
    </location>
</feature>
<protein>
    <recommendedName>
        <fullName evidence="1">Methylthioribose-1-phosphate isomerase</fullName>
        <shortName evidence="1">M1Pi</shortName>
        <shortName evidence="1">MTR-1-P isomerase</shortName>
        <ecNumber evidence="1">5.3.1.23</ecNumber>
    </recommendedName>
    <alternativeName>
        <fullName evidence="1">S-methyl-5-thioribose-1-phosphate isomerase</fullName>
    </alternativeName>
</protein>
<organism>
    <name type="scientific">Bacillus thuringiensis subsp. konkukian (strain 97-27)</name>
    <dbReference type="NCBI Taxonomy" id="281309"/>
    <lineage>
        <taxon>Bacteria</taxon>
        <taxon>Bacillati</taxon>
        <taxon>Bacillota</taxon>
        <taxon>Bacilli</taxon>
        <taxon>Bacillales</taxon>
        <taxon>Bacillaceae</taxon>
        <taxon>Bacillus</taxon>
        <taxon>Bacillus cereus group</taxon>
    </lineage>
</organism>
<reference key="1">
    <citation type="journal article" date="2006" name="J. Bacteriol.">
        <title>Pathogenomic sequence analysis of Bacillus cereus and Bacillus thuringiensis isolates closely related to Bacillus anthracis.</title>
        <authorList>
            <person name="Han C.S."/>
            <person name="Xie G."/>
            <person name="Challacombe J.F."/>
            <person name="Altherr M.R."/>
            <person name="Bhotika S.S."/>
            <person name="Bruce D."/>
            <person name="Campbell C.S."/>
            <person name="Campbell M.L."/>
            <person name="Chen J."/>
            <person name="Chertkov O."/>
            <person name="Cleland C."/>
            <person name="Dimitrijevic M."/>
            <person name="Doggett N.A."/>
            <person name="Fawcett J.J."/>
            <person name="Glavina T."/>
            <person name="Goodwin L.A."/>
            <person name="Hill K.K."/>
            <person name="Hitchcock P."/>
            <person name="Jackson P.J."/>
            <person name="Keim P."/>
            <person name="Kewalramani A.R."/>
            <person name="Longmire J."/>
            <person name="Lucas S."/>
            <person name="Malfatti S."/>
            <person name="McMurry K."/>
            <person name="Meincke L.J."/>
            <person name="Misra M."/>
            <person name="Moseman B.L."/>
            <person name="Mundt M."/>
            <person name="Munk A.C."/>
            <person name="Okinaka R.T."/>
            <person name="Parson-Quintana B."/>
            <person name="Reilly L.P."/>
            <person name="Richardson P."/>
            <person name="Robinson D.L."/>
            <person name="Rubin E."/>
            <person name="Saunders E."/>
            <person name="Tapia R."/>
            <person name="Tesmer J.G."/>
            <person name="Thayer N."/>
            <person name="Thompson L.S."/>
            <person name="Tice H."/>
            <person name="Ticknor L.O."/>
            <person name="Wills P.L."/>
            <person name="Brettin T.S."/>
            <person name="Gilna P."/>
        </authorList>
    </citation>
    <scope>NUCLEOTIDE SEQUENCE [LARGE SCALE GENOMIC DNA]</scope>
    <source>
        <strain>97-27</strain>
    </source>
</reference>
<evidence type="ECO:0000255" key="1">
    <source>
        <dbReference type="HAMAP-Rule" id="MF_01678"/>
    </source>
</evidence>
<sequence length="351" mass="38622">MSTVVTIPRSVSWKGDAIAVLNQTKLPHSTEYKTLTTIEEVWKSIVMLEVRGAPAIGIVAAFGLALASKKYTTLHIEEFQKKFNRDCNYLGTSRPTAVNLFWAIDRMRESIQEITTIKEAQKILEEEALRIQQEDEAVCRSIGEHALTCFKDGDNILTICNAGSIATARYGTALAPFYIGKEKGVRLHAYACETRPVLQGGRLTTWELKQAGIDVTLITDNTAAHAIQTKEINAIIVGADRIVANGDTANKIGTMNLAILAKYFDIPFYVAAPLSTFDITKQTGAEIVIEERDETEVTKIFGKQVAPVGTTVYNPAFDVTPNKLITGIITEKGIICGDYKREIVSLFEKTS</sequence>
<keyword id="KW-0028">Amino-acid biosynthesis</keyword>
<keyword id="KW-0413">Isomerase</keyword>
<keyword id="KW-0486">Methionine biosynthesis</keyword>
<proteinExistence type="inferred from homology"/>
<gene>
    <name evidence="1" type="primary">mtnA</name>
    <name type="ordered locus">BT9727_3774</name>
</gene>
<accession>Q6HED3</accession>